<sequence length="1093" mass="124150">MKLLYTDIRHSLTKVLVAEAESLVAAGKRVFYIAPNSLSFEKERSVLECLKTQASFAITVTRFAQMARYFVLNDVRQGQSLDDIGLGMLIYRTLTELDDGELKVYSRIKKDPQFIQQLMDLYHELQTAQMSFADLEFLEEPEKREDLVKIFTAVTAALNKGDFDSSSQIAAFAQHILAGDTDEELADLALVIDGFTRFSAEEEYLVGLLHRKGVEIVIGTYASQKAYRAAFREGNLYQASVDFLRKLAEDYQVKPDYIPHAEAEDAFGRISKILESRYDFSESTVSLSESDRSQLQIWATMNQKEELEYVAKSIRQRVHEGVRYKDIRLLLGDVEAYQLQLKTIFDQYQIPYYLGRSESMAQHPLVQFVESLERLKRYNFQLEDLLNLLKTGLYGDLTQEELDHFEQYLRFADIKGAGKLAKDFTANSQGKFDLDCLNHIRRRVMTPLQDFFKSRSQTASGLLAKFTEFVQAARLSDNLTALLQGESQQEQERHEEVWKAFSHVLEQFAQVFADSKVKLDDFLALVLSGMLLSNYRTVPATVDVVKVQSYDLIEPLAAPYVYAIGLTQERFPKIAQNKSLLSDEDRARLNDATDSQAELQIASSENLKKNRYTALSLMNSATKELVLSAPALVNEVEDSMSTYLLELTAAPLSLPIIVKKPQASSDDIGSYRALLSQIIELHQEEIDREWTAEEQTFWAVAVRVLRKKLAAEGISIPHISKELKTETLQSETLQALYPQEQPLRLSASALNEYFRHQYAYFLKYVLRLQEEWTIHPDARSHGIFLHRIFEKVLQDDSSADFDRRLAQAMEETSREAEFESIYSESGQTRFARQLLLDTARATGRVLAHPSGIETIGEETGFGSASTPFLTLENGRAVTVSGKVDRIDRLTKTESLGVVDYKSGDIKFSFEKFFNGLNSQLPTYLAAIEELADYQEDKGTFGAMYLQMTDPIVALKDTKTLADAVSQSMKPLQYKGLFVADAVKELGPLYEKNKTNLLSQEDLDLLLAYNAYLYKKAAEGILSGHFAVNPYTENGRSIAPYVEQFKAITGFEANLHLGQARQLEKLDASKFDRRPTGDKLRQAWLEKMREEMEK</sequence>
<organism>
    <name type="scientific">Streptococcus sanguinis (strain SK36)</name>
    <dbReference type="NCBI Taxonomy" id="388919"/>
    <lineage>
        <taxon>Bacteria</taxon>
        <taxon>Bacillati</taxon>
        <taxon>Bacillota</taxon>
        <taxon>Bacilli</taxon>
        <taxon>Lactobacillales</taxon>
        <taxon>Streptococcaceae</taxon>
        <taxon>Streptococcus</taxon>
    </lineage>
</organism>
<gene>
    <name evidence="1" type="primary">rexB</name>
    <name type="ordered locus">SSA_1452</name>
</gene>
<keyword id="KW-0067">ATP-binding</keyword>
<keyword id="KW-0227">DNA damage</keyword>
<keyword id="KW-0234">DNA repair</keyword>
<keyword id="KW-0238">DNA-binding</keyword>
<keyword id="KW-0269">Exonuclease</keyword>
<keyword id="KW-0347">Helicase</keyword>
<keyword id="KW-0378">Hydrolase</keyword>
<keyword id="KW-0540">Nuclease</keyword>
<keyword id="KW-0547">Nucleotide-binding</keyword>
<keyword id="KW-1185">Reference proteome</keyword>
<evidence type="ECO:0000255" key="1">
    <source>
        <dbReference type="HAMAP-Rule" id="MF_01453"/>
    </source>
</evidence>
<feature type="chain" id="PRO_0000379412" description="ATP-dependent helicase/deoxyribonuclease subunit B">
    <location>
        <begin position="1"/>
        <end position="1093"/>
    </location>
</feature>
<comment type="function">
    <text evidence="1">The heterodimer acts as both an ATP-dependent DNA helicase and an ATP-dependent, dual-direction single-stranded exonuclease. Recognizes the chi site generating a DNA molecule suitable for the initiation of homologous recombination. This subunit has 5' -&gt; 3' nuclease activity but not helicase activity.</text>
</comment>
<comment type="cofactor">
    <cofactor evidence="1">
        <name>Mg(2+)</name>
        <dbReference type="ChEBI" id="CHEBI:18420"/>
    </cofactor>
</comment>
<comment type="subunit">
    <text evidence="1">Heterodimer of AddA and RexB.</text>
</comment>
<comment type="miscellaneous">
    <text evidence="1">Despite having helicase-like domains, this subunit does not have helicase activity.</text>
</comment>
<comment type="similarity">
    <text evidence="1">Belongs to the helicase family. AddB/RexB type 2 subfamily.</text>
</comment>
<name>ADDB_STRSV</name>
<protein>
    <recommendedName>
        <fullName evidence="1">ATP-dependent helicase/deoxyribonuclease subunit B</fullName>
        <ecNumber evidence="1">3.1.-.-</ecNumber>
    </recommendedName>
    <alternativeName>
        <fullName evidence="1">ATP-dependent helicase/nuclease subunit RexB</fullName>
    </alternativeName>
</protein>
<reference key="1">
    <citation type="journal article" date="2007" name="J. Bacteriol.">
        <title>Genome of the opportunistic pathogen Streptococcus sanguinis.</title>
        <authorList>
            <person name="Xu P."/>
            <person name="Alves J.M."/>
            <person name="Kitten T."/>
            <person name="Brown A."/>
            <person name="Chen Z."/>
            <person name="Ozaki L.S."/>
            <person name="Manque P."/>
            <person name="Ge X."/>
            <person name="Serrano M.G."/>
            <person name="Puiu D."/>
            <person name="Hendricks S."/>
            <person name="Wang Y."/>
            <person name="Chaplin M.D."/>
            <person name="Akan D."/>
            <person name="Paik S."/>
            <person name="Peterson D.L."/>
            <person name="Macrina F.L."/>
            <person name="Buck G.A."/>
        </authorList>
    </citation>
    <scope>NUCLEOTIDE SEQUENCE [LARGE SCALE GENOMIC DNA]</scope>
    <source>
        <strain>SK36</strain>
    </source>
</reference>
<dbReference type="EC" id="3.1.-.-" evidence="1"/>
<dbReference type="EMBL" id="CP000387">
    <property type="protein sequence ID" value="ABN44845.1"/>
    <property type="molecule type" value="Genomic_DNA"/>
</dbReference>
<dbReference type="RefSeq" id="WP_011837145.1">
    <property type="nucleotide sequence ID" value="NC_009009.1"/>
</dbReference>
<dbReference type="RefSeq" id="YP_001035395.1">
    <property type="nucleotide sequence ID" value="NC_009009.1"/>
</dbReference>
<dbReference type="SMR" id="A3CNU0"/>
<dbReference type="STRING" id="388919.SSA_1452"/>
<dbReference type="KEGG" id="ssa:SSA_1452"/>
<dbReference type="PATRIC" id="fig|388919.9.peg.1377"/>
<dbReference type="eggNOG" id="COG3857">
    <property type="taxonomic scope" value="Bacteria"/>
</dbReference>
<dbReference type="HOGENOM" id="CLU_007838_1_0_9"/>
<dbReference type="OrthoDB" id="9758506at2"/>
<dbReference type="Proteomes" id="UP000002148">
    <property type="component" value="Chromosome"/>
</dbReference>
<dbReference type="GO" id="GO:0008409">
    <property type="term" value="F:5'-3' exonuclease activity"/>
    <property type="evidence" value="ECO:0007669"/>
    <property type="project" value="UniProtKB-UniRule"/>
</dbReference>
<dbReference type="GO" id="GO:0005524">
    <property type="term" value="F:ATP binding"/>
    <property type="evidence" value="ECO:0007669"/>
    <property type="project" value="UniProtKB-UniRule"/>
</dbReference>
<dbReference type="GO" id="GO:0003690">
    <property type="term" value="F:double-stranded DNA binding"/>
    <property type="evidence" value="ECO:0007669"/>
    <property type="project" value="UniProtKB-UniRule"/>
</dbReference>
<dbReference type="GO" id="GO:0004386">
    <property type="term" value="F:helicase activity"/>
    <property type="evidence" value="ECO:0007669"/>
    <property type="project" value="UniProtKB-KW"/>
</dbReference>
<dbReference type="GO" id="GO:0016817">
    <property type="term" value="F:hydrolase activity, acting on acid anhydrides"/>
    <property type="evidence" value="ECO:0007669"/>
    <property type="project" value="InterPro"/>
</dbReference>
<dbReference type="GO" id="GO:0000724">
    <property type="term" value="P:double-strand break repair via homologous recombination"/>
    <property type="evidence" value="ECO:0007669"/>
    <property type="project" value="UniProtKB-UniRule"/>
</dbReference>
<dbReference type="Gene3D" id="3.40.50.300">
    <property type="entry name" value="P-loop containing nucleotide triphosphate hydrolases"/>
    <property type="match status" value="4"/>
</dbReference>
<dbReference type="HAMAP" id="MF_01453">
    <property type="entry name" value="AddB_type2"/>
    <property type="match status" value="1"/>
</dbReference>
<dbReference type="InterPro" id="IPR049035">
    <property type="entry name" value="ADDB_N"/>
</dbReference>
<dbReference type="InterPro" id="IPR014141">
    <property type="entry name" value="DNA_helicase_suRexB"/>
</dbReference>
<dbReference type="InterPro" id="IPR027417">
    <property type="entry name" value="P-loop_NTPase"/>
</dbReference>
<dbReference type="InterPro" id="IPR038726">
    <property type="entry name" value="PDDEXK_AddAB-type"/>
</dbReference>
<dbReference type="InterPro" id="IPR011335">
    <property type="entry name" value="Restrct_endonuc-II-like"/>
</dbReference>
<dbReference type="NCBIfam" id="TIGR02774">
    <property type="entry name" value="rexB_recomb"/>
    <property type="match status" value="1"/>
</dbReference>
<dbReference type="PANTHER" id="PTHR30591">
    <property type="entry name" value="RECBCD ENZYME SUBUNIT RECC"/>
    <property type="match status" value="1"/>
</dbReference>
<dbReference type="PANTHER" id="PTHR30591:SF1">
    <property type="entry name" value="RECBCD ENZYME SUBUNIT RECC"/>
    <property type="match status" value="1"/>
</dbReference>
<dbReference type="Pfam" id="PF21445">
    <property type="entry name" value="ADDB_N"/>
    <property type="match status" value="1"/>
</dbReference>
<dbReference type="Pfam" id="PF12705">
    <property type="entry name" value="PDDEXK_1"/>
    <property type="match status" value="1"/>
</dbReference>
<dbReference type="SUPFAM" id="SSF52540">
    <property type="entry name" value="P-loop containing nucleoside triphosphate hydrolases"/>
    <property type="match status" value="1"/>
</dbReference>
<dbReference type="SUPFAM" id="SSF52980">
    <property type="entry name" value="Restriction endonuclease-like"/>
    <property type="match status" value="1"/>
</dbReference>
<proteinExistence type="inferred from homology"/>
<accession>A3CNU0</accession>